<reference key="1">
    <citation type="journal article" date="2006" name="Nat. Biotechnol.">
        <title>Complete genome of the mutualistic, N2-fixing grass endophyte Azoarcus sp. strain BH72.</title>
        <authorList>
            <person name="Krause A."/>
            <person name="Ramakumar A."/>
            <person name="Bartels D."/>
            <person name="Battistoni F."/>
            <person name="Bekel T."/>
            <person name="Boch J."/>
            <person name="Boehm M."/>
            <person name="Friedrich F."/>
            <person name="Hurek T."/>
            <person name="Krause L."/>
            <person name="Linke B."/>
            <person name="McHardy A.C."/>
            <person name="Sarkar A."/>
            <person name="Schneiker S."/>
            <person name="Syed A.A."/>
            <person name="Thauer R."/>
            <person name="Vorhoelter F.-J."/>
            <person name="Weidner S."/>
            <person name="Puehler A."/>
            <person name="Reinhold-Hurek B."/>
            <person name="Kaiser O."/>
            <person name="Goesmann A."/>
        </authorList>
    </citation>
    <scope>NUCLEOTIDE SEQUENCE [LARGE SCALE GENOMIC DNA]</scope>
    <source>
        <strain>BH72</strain>
    </source>
</reference>
<accession>A1K1B4</accession>
<comment type="function">
    <text evidence="1">Plays an essential role in the initiation and regulation of chromosomal replication. ATP-DnaA binds to the origin of replication (oriC) to initiate formation of the DNA replication initiation complex once per cell cycle. Binds the DnaA box (a 9 base pair repeat at the origin) and separates the double-stranded (ds)DNA. Forms a right-handed helical filament on oriC DNA; dsDNA binds to the exterior of the filament while single-stranded (ss)DNA is stabiized in the filament's interior. The ATP-DnaA-oriC complex binds and stabilizes one strand of the AT-rich DNA unwinding element (DUE), permitting loading of DNA polymerase. After initiation quickly degrades to an ADP-DnaA complex that is not apt for DNA replication. Binds acidic phospholipids.</text>
</comment>
<comment type="subunit">
    <text evidence="1">Oligomerizes as a right-handed, spiral filament on DNA at oriC.</text>
</comment>
<comment type="subcellular location">
    <subcellularLocation>
        <location evidence="1">Cytoplasm</location>
    </subcellularLocation>
</comment>
<comment type="domain">
    <text evidence="1">Domain I is involved in oligomerization and binding regulators, domain II is flexibile and of varying length in different bacteria, domain III forms the AAA+ region, while domain IV binds dsDNA.</text>
</comment>
<comment type="similarity">
    <text evidence="1">Belongs to the DnaA family.</text>
</comment>
<protein>
    <recommendedName>
        <fullName evidence="1">Chromosomal replication initiator protein DnaA</fullName>
    </recommendedName>
</protein>
<keyword id="KW-0067">ATP-binding</keyword>
<keyword id="KW-0963">Cytoplasm</keyword>
<keyword id="KW-0235">DNA replication</keyword>
<keyword id="KW-0238">DNA-binding</keyword>
<keyword id="KW-0446">Lipid-binding</keyword>
<keyword id="KW-0547">Nucleotide-binding</keyword>
<keyword id="KW-1185">Reference proteome</keyword>
<organism>
    <name type="scientific">Azoarcus sp. (strain BH72)</name>
    <dbReference type="NCBI Taxonomy" id="418699"/>
    <lineage>
        <taxon>Bacteria</taxon>
        <taxon>Pseudomonadati</taxon>
        <taxon>Pseudomonadota</taxon>
        <taxon>Betaproteobacteria</taxon>
        <taxon>Rhodocyclales</taxon>
        <taxon>Zoogloeaceae</taxon>
        <taxon>Azoarcus</taxon>
    </lineage>
</organism>
<evidence type="ECO:0000255" key="1">
    <source>
        <dbReference type="HAMAP-Rule" id="MF_00377"/>
    </source>
</evidence>
<sequence length="480" mass="54044">MNQDFWPFCLARLEQELPQQQFNTWIKTLQAAESDADGAVALTLTAPNRFVLQWVRERYMRRIGELGEEFHGQPIQLELQLPVAGAKSAPVAPARVRPAGANGGAAANSPMAPPVSEAAPPQIIVRPSEPEPVSANELAYDKTRLNADFTFDTLVTGRANDLARAAAMQVAQNPGTSYNPLFVYGGVGLGKTHLVHAIGNAVYRHNPRMVIRYVHVEDYYADVVRAYQQKSFDAFKRYYRSLDMLIIDDIQFFNNKNRTQEEFFHAFNALTEAKKQIVITCDTYPKDIQGLEDRLISRFDWGLTVQIEPPELEMRVAILQKKAEALRVSVDDDVAFLIAKNLRSNVRELEGALNKVVAYARFHGRGISLEVAKEALKDLLHAHNRQLSIEHIQKTVADYYKIKVADMHSKKRTRVIARPRQVAMWLAKELTPMSLPAIGEAFGGRDHTTVLHACRTITELRLGDHQLNHDVHVLTQVLRG</sequence>
<dbReference type="EMBL" id="AM406670">
    <property type="protein sequence ID" value="CAL92619.1"/>
    <property type="molecule type" value="Genomic_DNA"/>
</dbReference>
<dbReference type="RefSeq" id="WP_011763738.1">
    <property type="nucleotide sequence ID" value="NC_008702.1"/>
</dbReference>
<dbReference type="SMR" id="A1K1B4"/>
<dbReference type="STRING" id="62928.azo0001"/>
<dbReference type="KEGG" id="aoa:dqs_0001"/>
<dbReference type="KEGG" id="azo:azo0001"/>
<dbReference type="eggNOG" id="COG0593">
    <property type="taxonomic scope" value="Bacteria"/>
</dbReference>
<dbReference type="HOGENOM" id="CLU_026910_0_1_4"/>
<dbReference type="OrthoDB" id="9807019at2"/>
<dbReference type="Proteomes" id="UP000002588">
    <property type="component" value="Chromosome"/>
</dbReference>
<dbReference type="GO" id="GO:0005737">
    <property type="term" value="C:cytoplasm"/>
    <property type="evidence" value="ECO:0007669"/>
    <property type="project" value="UniProtKB-SubCell"/>
</dbReference>
<dbReference type="GO" id="GO:0005886">
    <property type="term" value="C:plasma membrane"/>
    <property type="evidence" value="ECO:0007669"/>
    <property type="project" value="TreeGrafter"/>
</dbReference>
<dbReference type="GO" id="GO:0005524">
    <property type="term" value="F:ATP binding"/>
    <property type="evidence" value="ECO:0007669"/>
    <property type="project" value="UniProtKB-UniRule"/>
</dbReference>
<dbReference type="GO" id="GO:0016887">
    <property type="term" value="F:ATP hydrolysis activity"/>
    <property type="evidence" value="ECO:0007669"/>
    <property type="project" value="InterPro"/>
</dbReference>
<dbReference type="GO" id="GO:0003688">
    <property type="term" value="F:DNA replication origin binding"/>
    <property type="evidence" value="ECO:0007669"/>
    <property type="project" value="UniProtKB-UniRule"/>
</dbReference>
<dbReference type="GO" id="GO:0008289">
    <property type="term" value="F:lipid binding"/>
    <property type="evidence" value="ECO:0007669"/>
    <property type="project" value="UniProtKB-KW"/>
</dbReference>
<dbReference type="GO" id="GO:0006270">
    <property type="term" value="P:DNA replication initiation"/>
    <property type="evidence" value="ECO:0007669"/>
    <property type="project" value="UniProtKB-UniRule"/>
</dbReference>
<dbReference type="GO" id="GO:0006275">
    <property type="term" value="P:regulation of DNA replication"/>
    <property type="evidence" value="ECO:0007669"/>
    <property type="project" value="UniProtKB-UniRule"/>
</dbReference>
<dbReference type="CDD" id="cd00009">
    <property type="entry name" value="AAA"/>
    <property type="match status" value="1"/>
</dbReference>
<dbReference type="CDD" id="cd06571">
    <property type="entry name" value="Bac_DnaA_C"/>
    <property type="match status" value="1"/>
</dbReference>
<dbReference type="FunFam" id="1.10.8.60:FF:000003">
    <property type="entry name" value="Chromosomal replication initiator protein DnaA"/>
    <property type="match status" value="1"/>
</dbReference>
<dbReference type="FunFam" id="3.40.50.300:FF:000668">
    <property type="entry name" value="Chromosomal replication initiator protein DnaA"/>
    <property type="match status" value="1"/>
</dbReference>
<dbReference type="Gene3D" id="1.10.1750.10">
    <property type="match status" value="1"/>
</dbReference>
<dbReference type="Gene3D" id="1.10.8.60">
    <property type="match status" value="1"/>
</dbReference>
<dbReference type="Gene3D" id="3.30.300.180">
    <property type="match status" value="1"/>
</dbReference>
<dbReference type="Gene3D" id="3.40.50.300">
    <property type="entry name" value="P-loop containing nucleotide triphosphate hydrolases"/>
    <property type="match status" value="1"/>
</dbReference>
<dbReference type="HAMAP" id="MF_00377">
    <property type="entry name" value="DnaA_bact"/>
    <property type="match status" value="1"/>
</dbReference>
<dbReference type="InterPro" id="IPR003593">
    <property type="entry name" value="AAA+_ATPase"/>
</dbReference>
<dbReference type="InterPro" id="IPR001957">
    <property type="entry name" value="Chromosome_initiator_DnaA"/>
</dbReference>
<dbReference type="InterPro" id="IPR020591">
    <property type="entry name" value="Chromosome_initiator_DnaA-like"/>
</dbReference>
<dbReference type="InterPro" id="IPR018312">
    <property type="entry name" value="Chromosome_initiator_DnaA_CS"/>
</dbReference>
<dbReference type="InterPro" id="IPR013159">
    <property type="entry name" value="DnaA_C"/>
</dbReference>
<dbReference type="InterPro" id="IPR013317">
    <property type="entry name" value="DnaA_dom"/>
</dbReference>
<dbReference type="InterPro" id="IPR024633">
    <property type="entry name" value="DnaA_N_dom"/>
</dbReference>
<dbReference type="InterPro" id="IPR038454">
    <property type="entry name" value="DnaA_N_sf"/>
</dbReference>
<dbReference type="InterPro" id="IPR027417">
    <property type="entry name" value="P-loop_NTPase"/>
</dbReference>
<dbReference type="InterPro" id="IPR010921">
    <property type="entry name" value="Trp_repressor/repl_initiator"/>
</dbReference>
<dbReference type="NCBIfam" id="TIGR00362">
    <property type="entry name" value="DnaA"/>
    <property type="match status" value="1"/>
</dbReference>
<dbReference type="PANTHER" id="PTHR30050">
    <property type="entry name" value="CHROMOSOMAL REPLICATION INITIATOR PROTEIN DNAA"/>
    <property type="match status" value="1"/>
</dbReference>
<dbReference type="PANTHER" id="PTHR30050:SF2">
    <property type="entry name" value="CHROMOSOMAL REPLICATION INITIATOR PROTEIN DNAA"/>
    <property type="match status" value="1"/>
</dbReference>
<dbReference type="Pfam" id="PF00308">
    <property type="entry name" value="Bac_DnaA"/>
    <property type="match status" value="1"/>
</dbReference>
<dbReference type="Pfam" id="PF08299">
    <property type="entry name" value="Bac_DnaA_C"/>
    <property type="match status" value="1"/>
</dbReference>
<dbReference type="Pfam" id="PF11638">
    <property type="entry name" value="DnaA_N"/>
    <property type="match status" value="1"/>
</dbReference>
<dbReference type="PRINTS" id="PR00051">
    <property type="entry name" value="DNAA"/>
</dbReference>
<dbReference type="SMART" id="SM00382">
    <property type="entry name" value="AAA"/>
    <property type="match status" value="1"/>
</dbReference>
<dbReference type="SMART" id="SM00760">
    <property type="entry name" value="Bac_DnaA_C"/>
    <property type="match status" value="1"/>
</dbReference>
<dbReference type="SUPFAM" id="SSF52540">
    <property type="entry name" value="P-loop containing nucleoside triphosphate hydrolases"/>
    <property type="match status" value="1"/>
</dbReference>
<dbReference type="SUPFAM" id="SSF48295">
    <property type="entry name" value="TrpR-like"/>
    <property type="match status" value="1"/>
</dbReference>
<dbReference type="PROSITE" id="PS01008">
    <property type="entry name" value="DNAA"/>
    <property type="match status" value="1"/>
</dbReference>
<name>DNAA_AZOSB</name>
<feature type="chain" id="PRO_1000048605" description="Chromosomal replication initiator protein DnaA">
    <location>
        <begin position="1"/>
        <end position="480"/>
    </location>
</feature>
<feature type="region of interest" description="Domain I, interacts with DnaA modulators" evidence="1">
    <location>
        <begin position="1"/>
        <end position="73"/>
    </location>
</feature>
<feature type="region of interest" description="Domain II" evidence="1">
    <location>
        <begin position="73"/>
        <end position="143"/>
    </location>
</feature>
<feature type="region of interest" description="Domain III, AAA+ region" evidence="1">
    <location>
        <begin position="144"/>
        <end position="360"/>
    </location>
</feature>
<feature type="region of interest" description="Domain IV, binds dsDNA" evidence="1">
    <location>
        <begin position="361"/>
        <end position="480"/>
    </location>
</feature>
<feature type="binding site" evidence="1">
    <location>
        <position position="188"/>
    </location>
    <ligand>
        <name>ATP</name>
        <dbReference type="ChEBI" id="CHEBI:30616"/>
    </ligand>
</feature>
<feature type="binding site" evidence="1">
    <location>
        <position position="190"/>
    </location>
    <ligand>
        <name>ATP</name>
        <dbReference type="ChEBI" id="CHEBI:30616"/>
    </ligand>
</feature>
<feature type="binding site" evidence="1">
    <location>
        <position position="191"/>
    </location>
    <ligand>
        <name>ATP</name>
        <dbReference type="ChEBI" id="CHEBI:30616"/>
    </ligand>
</feature>
<feature type="binding site" evidence="1">
    <location>
        <position position="192"/>
    </location>
    <ligand>
        <name>ATP</name>
        <dbReference type="ChEBI" id="CHEBI:30616"/>
    </ligand>
</feature>
<proteinExistence type="inferred from homology"/>
<gene>
    <name evidence="1" type="primary">dnaA</name>
    <name type="ordered locus">azo0001</name>
</gene>